<feature type="chain" id="PRO_0000415869" description="Thiamine thiazole synthase">
    <location>
        <begin position="1"/>
        <end position="334"/>
    </location>
</feature>
<feature type="binding site" evidence="1">
    <location>
        <position position="86"/>
    </location>
    <ligand>
        <name>substrate</name>
    </ligand>
</feature>
<feature type="binding site" evidence="1">
    <location>
        <begin position="107"/>
        <end position="108"/>
    </location>
    <ligand>
        <name>substrate</name>
    </ligand>
</feature>
<feature type="binding site" evidence="1">
    <location>
        <position position="115"/>
    </location>
    <ligand>
        <name>substrate</name>
    </ligand>
</feature>
<feature type="binding site" evidence="1">
    <location>
        <position position="183"/>
    </location>
    <ligand>
        <name>substrate</name>
    </ligand>
</feature>
<feature type="binding site" evidence="1">
    <location>
        <position position="223"/>
    </location>
    <ligand>
        <name>substrate</name>
    </ligand>
</feature>
<feature type="binding site" evidence="1">
    <location>
        <position position="238"/>
    </location>
    <ligand>
        <name>substrate</name>
    </ligand>
</feature>
<feature type="binding site" evidence="1">
    <location>
        <position position="290"/>
    </location>
    <ligand>
        <name>substrate</name>
    </ligand>
</feature>
<feature type="binding site" evidence="1">
    <location>
        <begin position="300"/>
        <end position="302"/>
    </location>
    <ligand>
        <name>substrate</name>
    </ligand>
</feature>
<feature type="modified residue" description="2,3-didehydroalanine (Cys)" evidence="1">
    <location>
        <position position="221"/>
    </location>
</feature>
<comment type="function">
    <text evidence="1">Involved in biosynthesis of the thiamine precursor thiazole. Catalyzes the conversion of NAD and glycine to adenosine diphosphate 5-(2-hydroxyethyl)-4-methylthiazole-2-carboxylic acid (ADT), an adenylated thiazole intermediate. The reaction includes an iron-dependent sulfide transfer from a conserved cysteine residue of the protein to a thiazole intermediate. The enzyme can only undergo a single turnover, which suggests it is a suicide enzyme. May have additional roles in adaptation to various stress conditions and in DNA damage tolerance.</text>
</comment>
<comment type="catalytic activity">
    <reaction evidence="1">
        <text>[ADP-thiazole synthase]-L-cysteine + glycine + NAD(+) = [ADP-thiazole synthase]-dehydroalanine + ADP-5-ethyl-4-methylthiazole-2-carboxylate + nicotinamide + 3 H2O + 2 H(+)</text>
        <dbReference type="Rhea" id="RHEA:55708"/>
        <dbReference type="Rhea" id="RHEA-COMP:14264"/>
        <dbReference type="Rhea" id="RHEA-COMP:14265"/>
        <dbReference type="ChEBI" id="CHEBI:15377"/>
        <dbReference type="ChEBI" id="CHEBI:15378"/>
        <dbReference type="ChEBI" id="CHEBI:17154"/>
        <dbReference type="ChEBI" id="CHEBI:29950"/>
        <dbReference type="ChEBI" id="CHEBI:57305"/>
        <dbReference type="ChEBI" id="CHEBI:57540"/>
        <dbReference type="ChEBI" id="CHEBI:90873"/>
        <dbReference type="ChEBI" id="CHEBI:139151"/>
        <dbReference type="EC" id="2.4.2.60"/>
    </reaction>
</comment>
<comment type="cofactor">
    <cofactor evidence="1">
        <name>Fe cation</name>
        <dbReference type="ChEBI" id="CHEBI:24875"/>
    </cofactor>
    <text evidence="1">Binds 1 Fe cation per subunit.</text>
</comment>
<comment type="subunit">
    <text evidence="1">Homooctamer.</text>
</comment>
<comment type="subcellular location">
    <subcellularLocation>
        <location evidence="1">Cytoplasm</location>
    </subcellularLocation>
    <subcellularLocation>
        <location evidence="1">Nucleus</location>
    </subcellularLocation>
</comment>
<comment type="PTM">
    <text evidence="1">During the catalytic reaction, a sulfide is transferred from Cys-221 to a reaction intermediate, generating a dehydroalanine residue.</text>
</comment>
<comment type="similarity">
    <text evidence="1">Belongs to the THI4 family.</text>
</comment>
<comment type="sequence caution" evidence="2">
    <conflict type="erroneous initiation">
        <sequence resource="EMBL-CDS" id="EEH05819"/>
    </conflict>
    <text>Extended N-terminus.</text>
</comment>
<protein>
    <recommendedName>
        <fullName evidence="1">Thiamine thiazole synthase</fullName>
        <ecNumber evidence="1">2.4.2.60</ecNumber>
    </recommendedName>
    <alternativeName>
        <fullName evidence="1">Thiazole biosynthetic enzyme</fullName>
    </alternativeName>
</protein>
<sequence length="334" mass="35737">MSPPSATYDVVAAAATSVAKTNKPSTAHGSLTSTSTILDEFAGKWDDFSFGHIRESQVSRAMTRRYFEDLDTYAESDIVIVGAGSCGLSTAYVLGKARPDLKIAVIEASVSPGGGAWLGGQLFSAMVLRKPADRFLDDLGVPYEEEPSNPNMVVIKHAALFTSTLLSKVLSFPNIKLFNATCVEDLITRPAPAAGDGEGIRIAGVVTNWTLVTLHHDDHSCMDPNTINAPLVISTTGHDGPFGAFCAKRLVSMAAIEKLGGMRGLDMNSAEEAIVKNTREVTKGLIIGGMELSEIDGWHRMGPIFSAMMLSGVRAAEVALEVFEERKRECADKK</sequence>
<proteinExistence type="inferred from homology"/>
<dbReference type="EC" id="2.4.2.60" evidence="1"/>
<dbReference type="EMBL" id="GG663370">
    <property type="protein sequence ID" value="EEH05819.1"/>
    <property type="status" value="ALT_INIT"/>
    <property type="molecule type" value="Genomic_DNA"/>
</dbReference>
<dbReference type="SMR" id="C0NSF3"/>
<dbReference type="FunCoup" id="C0NSF3">
    <property type="interactions" value="788"/>
</dbReference>
<dbReference type="STRING" id="447093.C0NSF3"/>
<dbReference type="VEuPathDB" id="FungiDB:I7I50_06406"/>
<dbReference type="HOGENOM" id="CLU_053727_0_0_1"/>
<dbReference type="InParanoid" id="C0NSF3"/>
<dbReference type="Proteomes" id="UP000001631">
    <property type="component" value="Unassembled WGS sequence"/>
</dbReference>
<dbReference type="GO" id="GO:0005829">
    <property type="term" value="C:cytosol"/>
    <property type="evidence" value="ECO:0007669"/>
    <property type="project" value="UniProtKB-UniRule"/>
</dbReference>
<dbReference type="GO" id="GO:0005634">
    <property type="term" value="C:nucleus"/>
    <property type="evidence" value="ECO:0007669"/>
    <property type="project" value="UniProtKB-SubCell"/>
</dbReference>
<dbReference type="GO" id="GO:0160205">
    <property type="term" value="F:cysteine-dependent adenosine diphosphate thiazole synthase activity"/>
    <property type="evidence" value="ECO:0007669"/>
    <property type="project" value="UniProtKB-EC"/>
</dbReference>
<dbReference type="GO" id="GO:0005506">
    <property type="term" value="F:iron ion binding"/>
    <property type="evidence" value="ECO:0007669"/>
    <property type="project" value="UniProtKB-UniRule"/>
</dbReference>
<dbReference type="GO" id="GO:0009228">
    <property type="term" value="P:thiamine biosynthetic process"/>
    <property type="evidence" value="ECO:0007669"/>
    <property type="project" value="UniProtKB-UniRule"/>
</dbReference>
<dbReference type="GO" id="GO:0052837">
    <property type="term" value="P:thiazole biosynthetic process"/>
    <property type="evidence" value="ECO:0007669"/>
    <property type="project" value="UniProtKB-UniRule"/>
</dbReference>
<dbReference type="Gene3D" id="6.10.250.2840">
    <property type="match status" value="1"/>
</dbReference>
<dbReference type="Gene3D" id="3.50.50.60">
    <property type="entry name" value="FAD/NAD(P)-binding domain"/>
    <property type="match status" value="1"/>
</dbReference>
<dbReference type="HAMAP" id="MF_03158">
    <property type="entry name" value="THI4"/>
    <property type="match status" value="1"/>
</dbReference>
<dbReference type="InterPro" id="IPR036188">
    <property type="entry name" value="FAD/NAD-bd_sf"/>
</dbReference>
<dbReference type="InterPro" id="IPR027495">
    <property type="entry name" value="Sti35"/>
</dbReference>
<dbReference type="InterPro" id="IPR002922">
    <property type="entry name" value="Thi4_fam"/>
</dbReference>
<dbReference type="NCBIfam" id="TIGR00292">
    <property type="entry name" value="sulfide-dependent adenosine diphosphate thiazole synthase"/>
    <property type="match status" value="1"/>
</dbReference>
<dbReference type="PANTHER" id="PTHR43422">
    <property type="entry name" value="THIAMINE THIAZOLE SYNTHASE"/>
    <property type="match status" value="1"/>
</dbReference>
<dbReference type="PANTHER" id="PTHR43422:SF3">
    <property type="entry name" value="THIAMINE THIAZOLE SYNTHASE"/>
    <property type="match status" value="1"/>
</dbReference>
<dbReference type="Pfam" id="PF01946">
    <property type="entry name" value="Thi4"/>
    <property type="match status" value="1"/>
</dbReference>
<dbReference type="SUPFAM" id="SSF51905">
    <property type="entry name" value="FAD/NAD(P)-binding domain"/>
    <property type="match status" value="1"/>
</dbReference>
<reference key="1">
    <citation type="submission" date="2009-02" db="EMBL/GenBank/DDBJ databases">
        <title>The genome sequence of Ajellomyces capsulatus strain G186AR.</title>
        <authorList>
            <person name="Champion M."/>
            <person name="Cuomo C.A."/>
            <person name="Ma L.-J."/>
            <person name="Henn M.R."/>
            <person name="Sil A."/>
            <person name="Goldman B."/>
            <person name="Young S.K."/>
            <person name="Kodira C.D."/>
            <person name="Zeng Q."/>
            <person name="Koehrsen M."/>
            <person name="Alvarado L."/>
            <person name="Berlin A."/>
            <person name="Borenstein D."/>
            <person name="Chen Z."/>
            <person name="Engels R."/>
            <person name="Freedman E."/>
            <person name="Gellesch M."/>
            <person name="Goldberg J."/>
            <person name="Griggs A."/>
            <person name="Gujja S."/>
            <person name="Heiman D."/>
            <person name="Hepburn T."/>
            <person name="Howarth C."/>
            <person name="Jen D."/>
            <person name="Larson L."/>
            <person name="Lewis B."/>
            <person name="Mehta T."/>
            <person name="Park D."/>
            <person name="Pearson M."/>
            <person name="Roberts A."/>
            <person name="Saif S."/>
            <person name="Shea T."/>
            <person name="Shenoy N."/>
            <person name="Sisk P."/>
            <person name="Stolte C."/>
            <person name="Sykes S."/>
            <person name="Walk T."/>
            <person name="White J."/>
            <person name="Yandava C."/>
            <person name="Klein B."/>
            <person name="McEwen J.G."/>
            <person name="Puccia R."/>
            <person name="Goldman G.H."/>
            <person name="Felipe M.S."/>
            <person name="Nino-Vega G."/>
            <person name="San-Blas G."/>
            <person name="Taylor J."/>
            <person name="Mendoza L."/>
            <person name="Galagan J.E."/>
            <person name="Nusbaum C."/>
            <person name="Birren B.W."/>
        </authorList>
    </citation>
    <scope>NUCLEOTIDE SEQUENCE [LARGE SCALE GENOMIC DNA]</scope>
    <source>
        <strain>G186AR / H82 / ATCC MYA-2454 / RMSCC 2432</strain>
    </source>
</reference>
<name>THI4_AJECG</name>
<gene>
    <name type="ORF">HCBG_06083</name>
</gene>
<accession>C0NSF3</accession>
<evidence type="ECO:0000255" key="1">
    <source>
        <dbReference type="HAMAP-Rule" id="MF_03158"/>
    </source>
</evidence>
<evidence type="ECO:0000305" key="2"/>
<organism>
    <name type="scientific">Ajellomyces capsulatus (strain G186AR / H82 / ATCC MYA-2454 / RMSCC 2432)</name>
    <name type="common">Darling's disease fungus</name>
    <name type="synonym">Histoplasma capsulatum</name>
    <dbReference type="NCBI Taxonomy" id="447093"/>
    <lineage>
        <taxon>Eukaryota</taxon>
        <taxon>Fungi</taxon>
        <taxon>Dikarya</taxon>
        <taxon>Ascomycota</taxon>
        <taxon>Pezizomycotina</taxon>
        <taxon>Eurotiomycetes</taxon>
        <taxon>Eurotiomycetidae</taxon>
        <taxon>Onygenales</taxon>
        <taxon>Ajellomycetaceae</taxon>
        <taxon>Histoplasma</taxon>
    </lineage>
</organism>
<keyword id="KW-0963">Cytoplasm</keyword>
<keyword id="KW-0408">Iron</keyword>
<keyword id="KW-0479">Metal-binding</keyword>
<keyword id="KW-0520">NAD</keyword>
<keyword id="KW-0539">Nucleus</keyword>
<keyword id="KW-1185">Reference proteome</keyword>
<keyword id="KW-0784">Thiamine biosynthesis</keyword>
<keyword id="KW-0808">Transferase</keyword>